<feature type="chain" id="PRO_0000115055" description="Small t antigen">
    <location>
        <begin position="1"/>
        <end position="194"/>
    </location>
</feature>
<feature type="domain" description="J" evidence="2">
    <location>
        <begin position="12"/>
        <end position="75"/>
    </location>
</feature>
<feature type="zinc finger region" description="C4-type; atypical">
    <location>
        <begin position="109"/>
        <end position="123"/>
    </location>
</feature>
<feature type="zinc finger region" description="H1C3-type; atypical">
    <location>
        <begin position="129"/>
        <end position="151"/>
    </location>
</feature>
<feature type="modified residue" description="N-acetylmethionine; by host" evidence="1">
    <location>
        <position position="1"/>
    </location>
</feature>
<keyword id="KW-0007">Acetylation</keyword>
<keyword id="KW-0010">Activator</keyword>
<keyword id="KW-0025">Alternative splicing</keyword>
<keyword id="KW-0244">Early protein</keyword>
<keyword id="KW-1035">Host cytoplasm</keyword>
<keyword id="KW-1048">Host nucleus</keyword>
<keyword id="KW-0945">Host-virus interaction</keyword>
<keyword id="KW-0479">Metal-binding</keyword>
<keyword id="KW-0553">Oncogene</keyword>
<keyword id="KW-0597">Phosphoprotein</keyword>
<keyword id="KW-1185">Reference proteome</keyword>
<keyword id="KW-0804">Transcription</keyword>
<keyword id="KW-0805">Transcription regulation</keyword>
<keyword id="KW-0862">Zinc</keyword>
<keyword id="KW-0863">Zinc-finger</keyword>
<name>ST_POVHA</name>
<dbReference type="EMBL" id="M26281">
    <property type="protein sequence ID" value="AAA67116.1"/>
    <property type="molecule type" value="Genomic_DNA"/>
</dbReference>
<dbReference type="EMBL" id="X02449">
    <property type="protein sequence ID" value="CAB59363.1"/>
    <property type="molecule type" value="Genomic_DNA"/>
</dbReference>
<dbReference type="PIR" id="A03616">
    <property type="entry name" value="TVVPAH"/>
</dbReference>
<dbReference type="RefSeq" id="YP_009111409.1">
    <molecule id="P03080-1"/>
    <property type="nucleotide sequence ID" value="NC_001663.2"/>
</dbReference>
<dbReference type="SMR" id="P03080"/>
<dbReference type="GeneID" id="29030999"/>
<dbReference type="KEGG" id="vg:29030999"/>
<dbReference type="OrthoDB" id="14669at10239"/>
<dbReference type="Proteomes" id="UP000008477">
    <property type="component" value="Genome"/>
</dbReference>
<dbReference type="GO" id="GO:0030430">
    <property type="term" value="C:host cell cytoplasm"/>
    <property type="evidence" value="ECO:0007669"/>
    <property type="project" value="UniProtKB-SubCell"/>
</dbReference>
<dbReference type="GO" id="GO:0042025">
    <property type="term" value="C:host cell nucleus"/>
    <property type="evidence" value="ECO:0007669"/>
    <property type="project" value="UniProtKB-SubCell"/>
</dbReference>
<dbReference type="GO" id="GO:0008270">
    <property type="term" value="F:zinc ion binding"/>
    <property type="evidence" value="ECO:0007669"/>
    <property type="project" value="UniProtKB-KW"/>
</dbReference>
<dbReference type="Gene3D" id="1.10.287.110">
    <property type="entry name" value="DnaJ domain"/>
    <property type="match status" value="1"/>
</dbReference>
<dbReference type="Gene3D" id="1.20.120.1860">
    <property type="entry name" value="Small t-antigen, unique domain"/>
    <property type="match status" value="1"/>
</dbReference>
<dbReference type="InterPro" id="IPR001623">
    <property type="entry name" value="DnaJ_domain"/>
</dbReference>
<dbReference type="InterPro" id="IPR036869">
    <property type="entry name" value="J_dom_sf"/>
</dbReference>
<dbReference type="InterPro" id="IPR003354">
    <property type="entry name" value="Papo_T_antigen"/>
</dbReference>
<dbReference type="InterPro" id="IPR036092">
    <property type="entry name" value="Papo_T_antigensf"/>
</dbReference>
<dbReference type="Pfam" id="PF02380">
    <property type="entry name" value="Papo_T_antigen"/>
    <property type="match status" value="1"/>
</dbReference>
<dbReference type="SMART" id="SM00271">
    <property type="entry name" value="DnaJ"/>
    <property type="match status" value="1"/>
</dbReference>
<dbReference type="SUPFAM" id="SSF46565">
    <property type="entry name" value="Chaperone J-domain"/>
    <property type="match status" value="1"/>
</dbReference>
<dbReference type="SUPFAM" id="SSF161240">
    <property type="entry name" value="T-antigen specific domain-like"/>
    <property type="match status" value="1"/>
</dbReference>
<dbReference type="PROSITE" id="PS50076">
    <property type="entry name" value="DNAJ_2"/>
    <property type="match status" value="1"/>
</dbReference>
<organismHost>
    <name type="scientific">Mesocricetus auratus</name>
    <name type="common">Golden hamster</name>
    <dbReference type="NCBI Taxonomy" id="10036"/>
</organismHost>
<accession>P03080</accession>
<comment type="function">
    <text evidence="1">Promotes efficient viral genome replication by accelerating both G1 and S phase progression of the cell cycle. Inhibits host PP2A by binding to the A subunit, thereby displacing lower affinity regulatory B subunit. Inactivation of PP2A in turn results in the transactivation of cyclin A and cyclin D1 promoters. Late during the infection cycle, ST may induce dephosphorylation of host MTOR, leading to the inhibition of cap-dependent translation. May establish and maintain high levels of viral genomes during persistent infection in cell culture.</text>
</comment>
<comment type="subunit">
    <text evidence="1">Interacts with host PPP2R1A; the interaction inhibits PP2A activity.</text>
</comment>
<comment type="subcellular location">
    <subcellularLocation>
        <location>Host cytoplasm</location>
    </subcellularLocation>
    <subcellularLocation>
        <location evidence="1">Host nucleus</location>
    </subcellularLocation>
</comment>
<comment type="alternative products">
    <event type="alternative splicing"/>
    <isoform>
        <id>P03080-1</id>
        <name>Small t antigen</name>
        <sequence type="displayed"/>
    </isoform>
    <isoform>
        <id>P03079-1</id>
        <name>Middle T antigen</name>
        <sequence type="external"/>
    </isoform>
    <isoform>
        <id>P03075-1</id>
        <name>Large T antigen</name>
        <sequence type="external"/>
    </isoform>
</comment>
<comment type="domain">
    <text evidence="1">The common region of ST and LT proteins comprises the J domain. This domain is essential for multiple viral activities, including virion assembly, viral DNA replication, transformation and transcriptional activation. This domain is also required for cyclin A-transactivating activity of ST.</text>
</comment>
<organism>
    <name type="scientific">Hamster polyomavirus</name>
    <name type="common">HaPyV</name>
    <name type="synonym">Mesocricetus auratus polyomavirus 1</name>
    <dbReference type="NCBI Taxonomy" id="1891729"/>
    <lineage>
        <taxon>Viruses</taxon>
        <taxon>Monodnaviria</taxon>
        <taxon>Shotokuvirae</taxon>
        <taxon>Cossaviricota</taxon>
        <taxon>Papovaviricetes</taxon>
        <taxon>Sepolyvirales</taxon>
        <taxon>Polyomaviridae</taxon>
        <taxon>Alphapolyomavirus</taxon>
    </lineage>
</organism>
<protein>
    <recommendedName>
        <fullName>Small t antigen</fullName>
        <shortName>ST</shortName>
        <shortName>ST-AG</shortName>
    </recommendedName>
</protein>
<sequence>MDRILTKEEKQALISLLDLEPQYWGDYGRMQKCYKKKCLQLHPDKGGNEELMQQLNTLWTKLKDGLYRVRLLLGPSQVRRLGKDQWNLSLQQTFSGTYFRRLCRLPITCLRNKGISTCNCILCLLRKQHFLLKKSWRVPCLVLGECYCIDCFALWFGLPVTNMLVPLYAQFLAPIPVDWLDLNVHEVYNPASGP</sequence>
<proteinExistence type="inferred from homology"/>
<evidence type="ECO:0000250" key="1">
    <source>
        <dbReference type="UniProtKB" id="P03081"/>
    </source>
</evidence>
<evidence type="ECO:0000255" key="2">
    <source>
        <dbReference type="PROSITE-ProRule" id="PRU00286"/>
    </source>
</evidence>
<reference key="1">
    <citation type="journal article" date="1985" name="EMBO J.">
        <title>A new member of the polyomavirus family: the hamster papovavirus. Complete nucleotide sequence and transformation properties.</title>
        <authorList>
            <person name="Delmas V."/>
            <person name="Bastien C."/>
            <person name="Scherneck S."/>
            <person name="Feunteun J."/>
        </authorList>
    </citation>
    <scope>NUCLEOTIDE SEQUENCE [GENOMIC DNA]</scope>
</reference>